<gene>
    <name evidence="1" type="primary">ispE</name>
    <name type="ordered locus">SCO3148</name>
    <name type="ORF">SCE66.27c</name>
</gene>
<evidence type="ECO:0000255" key="1">
    <source>
        <dbReference type="HAMAP-Rule" id="MF_00061"/>
    </source>
</evidence>
<organism>
    <name type="scientific">Streptomyces coelicolor (strain ATCC BAA-471 / A3(2) / M145)</name>
    <dbReference type="NCBI Taxonomy" id="100226"/>
    <lineage>
        <taxon>Bacteria</taxon>
        <taxon>Bacillati</taxon>
        <taxon>Actinomycetota</taxon>
        <taxon>Actinomycetes</taxon>
        <taxon>Kitasatosporales</taxon>
        <taxon>Streptomycetaceae</taxon>
        <taxon>Streptomyces</taxon>
        <taxon>Streptomyces albidoflavus group</taxon>
    </lineage>
</organism>
<comment type="function">
    <text evidence="1">Catalyzes the phosphorylation of the position 2 hydroxy group of 4-diphosphocytidyl-2C-methyl-D-erythritol.</text>
</comment>
<comment type="catalytic activity">
    <reaction evidence="1">
        <text>4-CDP-2-C-methyl-D-erythritol + ATP = 4-CDP-2-C-methyl-D-erythritol 2-phosphate + ADP + H(+)</text>
        <dbReference type="Rhea" id="RHEA:18437"/>
        <dbReference type="ChEBI" id="CHEBI:15378"/>
        <dbReference type="ChEBI" id="CHEBI:30616"/>
        <dbReference type="ChEBI" id="CHEBI:57823"/>
        <dbReference type="ChEBI" id="CHEBI:57919"/>
        <dbReference type="ChEBI" id="CHEBI:456216"/>
        <dbReference type="EC" id="2.7.1.148"/>
    </reaction>
</comment>
<comment type="pathway">
    <text evidence="1">Isoprenoid biosynthesis; isopentenyl diphosphate biosynthesis via DXP pathway; isopentenyl diphosphate from 1-deoxy-D-xylulose 5-phosphate: step 3/6.</text>
</comment>
<comment type="similarity">
    <text evidence="1">Belongs to the GHMP kinase family. IspE subfamily.</text>
</comment>
<name>ISPE_STRCO</name>
<dbReference type="EC" id="2.7.1.148" evidence="1"/>
<dbReference type="EMBL" id="AL939115">
    <property type="protein sequence ID" value="CAB95941.1"/>
    <property type="molecule type" value="Genomic_DNA"/>
</dbReference>
<dbReference type="RefSeq" id="NP_627365.1">
    <property type="nucleotide sequence ID" value="NC_003888.3"/>
</dbReference>
<dbReference type="RefSeq" id="WP_011028794.1">
    <property type="nucleotide sequence ID" value="NZ_VNID01000013.1"/>
</dbReference>
<dbReference type="SMR" id="Q9K3R6"/>
<dbReference type="FunCoup" id="Q9K3R6">
    <property type="interactions" value="177"/>
</dbReference>
<dbReference type="STRING" id="100226.gene:17760765"/>
<dbReference type="PaxDb" id="100226-SCO3148"/>
<dbReference type="KEGG" id="sco:SCO3148"/>
<dbReference type="PATRIC" id="fig|100226.15.peg.3209"/>
<dbReference type="eggNOG" id="COG1947">
    <property type="taxonomic scope" value="Bacteria"/>
</dbReference>
<dbReference type="HOGENOM" id="CLU_053057_1_1_11"/>
<dbReference type="InParanoid" id="Q9K3R6"/>
<dbReference type="OrthoDB" id="3173073at2"/>
<dbReference type="PhylomeDB" id="Q9K3R6"/>
<dbReference type="UniPathway" id="UPA00056">
    <property type="reaction ID" value="UER00094"/>
</dbReference>
<dbReference type="Proteomes" id="UP000001973">
    <property type="component" value="Chromosome"/>
</dbReference>
<dbReference type="GO" id="GO:0050515">
    <property type="term" value="F:4-(cytidine 5'-diphospho)-2-C-methyl-D-erythritol kinase activity"/>
    <property type="evidence" value="ECO:0000318"/>
    <property type="project" value="GO_Central"/>
</dbReference>
<dbReference type="GO" id="GO:0005524">
    <property type="term" value="F:ATP binding"/>
    <property type="evidence" value="ECO:0007669"/>
    <property type="project" value="UniProtKB-UniRule"/>
</dbReference>
<dbReference type="GO" id="GO:0019288">
    <property type="term" value="P:isopentenyl diphosphate biosynthetic process, methylerythritol 4-phosphate pathway"/>
    <property type="evidence" value="ECO:0007669"/>
    <property type="project" value="UniProtKB-UniRule"/>
</dbReference>
<dbReference type="GO" id="GO:0016114">
    <property type="term" value="P:terpenoid biosynthetic process"/>
    <property type="evidence" value="ECO:0007669"/>
    <property type="project" value="InterPro"/>
</dbReference>
<dbReference type="FunFam" id="3.30.230.10:FF:000076">
    <property type="entry name" value="4-diphosphocytidyl-2-C-methyl-D-erythritol kinase"/>
    <property type="match status" value="1"/>
</dbReference>
<dbReference type="Gene3D" id="3.30.230.10">
    <property type="match status" value="1"/>
</dbReference>
<dbReference type="Gene3D" id="3.30.70.890">
    <property type="entry name" value="GHMP kinase, C-terminal domain"/>
    <property type="match status" value="1"/>
</dbReference>
<dbReference type="HAMAP" id="MF_00061">
    <property type="entry name" value="IspE"/>
    <property type="match status" value="1"/>
</dbReference>
<dbReference type="InterPro" id="IPR013750">
    <property type="entry name" value="GHMP_kinase_C_dom"/>
</dbReference>
<dbReference type="InterPro" id="IPR036554">
    <property type="entry name" value="GHMP_kinase_C_sf"/>
</dbReference>
<dbReference type="InterPro" id="IPR006204">
    <property type="entry name" value="GHMP_kinase_N_dom"/>
</dbReference>
<dbReference type="InterPro" id="IPR004424">
    <property type="entry name" value="IspE"/>
</dbReference>
<dbReference type="InterPro" id="IPR020568">
    <property type="entry name" value="Ribosomal_Su5_D2-typ_SF"/>
</dbReference>
<dbReference type="InterPro" id="IPR014721">
    <property type="entry name" value="Ribsml_uS5_D2-typ_fold_subgr"/>
</dbReference>
<dbReference type="NCBIfam" id="TIGR00154">
    <property type="entry name" value="ispE"/>
    <property type="match status" value="1"/>
</dbReference>
<dbReference type="NCBIfam" id="NF002870">
    <property type="entry name" value="PRK03188.1"/>
    <property type="match status" value="1"/>
</dbReference>
<dbReference type="PANTHER" id="PTHR43527">
    <property type="entry name" value="4-DIPHOSPHOCYTIDYL-2-C-METHYL-D-ERYTHRITOL KINASE, CHLOROPLASTIC"/>
    <property type="match status" value="1"/>
</dbReference>
<dbReference type="PANTHER" id="PTHR43527:SF2">
    <property type="entry name" value="4-DIPHOSPHOCYTIDYL-2-C-METHYL-D-ERYTHRITOL KINASE, CHLOROPLASTIC"/>
    <property type="match status" value="1"/>
</dbReference>
<dbReference type="Pfam" id="PF08544">
    <property type="entry name" value="GHMP_kinases_C"/>
    <property type="match status" value="1"/>
</dbReference>
<dbReference type="Pfam" id="PF00288">
    <property type="entry name" value="GHMP_kinases_N"/>
    <property type="match status" value="1"/>
</dbReference>
<dbReference type="PIRSF" id="PIRSF010376">
    <property type="entry name" value="IspE"/>
    <property type="match status" value="1"/>
</dbReference>
<dbReference type="SUPFAM" id="SSF55060">
    <property type="entry name" value="GHMP Kinase, C-terminal domain"/>
    <property type="match status" value="1"/>
</dbReference>
<dbReference type="SUPFAM" id="SSF54211">
    <property type="entry name" value="Ribosomal protein S5 domain 2-like"/>
    <property type="match status" value="1"/>
</dbReference>
<feature type="chain" id="PRO_0000189272" description="4-diphosphocytidyl-2-C-methyl-D-erythritol kinase">
    <location>
        <begin position="1"/>
        <end position="299"/>
    </location>
</feature>
<feature type="active site" evidence="1">
    <location>
        <position position="10"/>
    </location>
</feature>
<feature type="active site" evidence="1">
    <location>
        <position position="138"/>
    </location>
</feature>
<feature type="binding site" evidence="1">
    <location>
        <begin position="96"/>
        <end position="106"/>
    </location>
    <ligand>
        <name>ATP</name>
        <dbReference type="ChEBI" id="CHEBI:30616"/>
    </ligand>
</feature>
<keyword id="KW-0067">ATP-binding</keyword>
<keyword id="KW-0414">Isoprene biosynthesis</keyword>
<keyword id="KW-0418">Kinase</keyword>
<keyword id="KW-0547">Nucleotide-binding</keyword>
<keyword id="KW-1185">Reference proteome</keyword>
<keyword id="KW-0808">Transferase</keyword>
<proteinExistence type="inferred from homology"/>
<sequence length="299" mass="29814">MSVTVRVPAKVNVQLAVGAARPDGFHDLANVFLAVSLYDEVTATPAADGLRVTCEGPDAGQVPLDRTNLAARAAEALAARYGRAPDVHLHIAKDIPVAGGMAGGSADGAGALLACDALWGTGASREELLEICAGLGSDVPFSLVGGAALGTGRGERLAELEVGGDFHWVFALAARGLSTPAVFREFDRLGEGLDLPEPVADQAVLDALAKGDAAALAVAVTNDLQPAALSLFPELSDTLAAGRAAGALAALVSGSGPTTAFLATDARSASDIAGVLRASGTCRDVRTAVGAAAGATVLD</sequence>
<reference key="1">
    <citation type="journal article" date="2002" name="Nature">
        <title>Complete genome sequence of the model actinomycete Streptomyces coelicolor A3(2).</title>
        <authorList>
            <person name="Bentley S.D."/>
            <person name="Chater K.F."/>
            <person name="Cerdeno-Tarraga A.-M."/>
            <person name="Challis G.L."/>
            <person name="Thomson N.R."/>
            <person name="James K.D."/>
            <person name="Harris D.E."/>
            <person name="Quail M.A."/>
            <person name="Kieser H."/>
            <person name="Harper D."/>
            <person name="Bateman A."/>
            <person name="Brown S."/>
            <person name="Chandra G."/>
            <person name="Chen C.W."/>
            <person name="Collins M."/>
            <person name="Cronin A."/>
            <person name="Fraser A."/>
            <person name="Goble A."/>
            <person name="Hidalgo J."/>
            <person name="Hornsby T."/>
            <person name="Howarth S."/>
            <person name="Huang C.-H."/>
            <person name="Kieser T."/>
            <person name="Larke L."/>
            <person name="Murphy L.D."/>
            <person name="Oliver K."/>
            <person name="O'Neil S."/>
            <person name="Rabbinowitsch E."/>
            <person name="Rajandream M.A."/>
            <person name="Rutherford K.M."/>
            <person name="Rutter S."/>
            <person name="Seeger K."/>
            <person name="Saunders D."/>
            <person name="Sharp S."/>
            <person name="Squares R."/>
            <person name="Squares S."/>
            <person name="Taylor K."/>
            <person name="Warren T."/>
            <person name="Wietzorrek A."/>
            <person name="Woodward J.R."/>
            <person name="Barrell B.G."/>
            <person name="Parkhill J."/>
            <person name="Hopwood D.A."/>
        </authorList>
    </citation>
    <scope>NUCLEOTIDE SEQUENCE [LARGE SCALE GENOMIC DNA]</scope>
    <source>
        <strain>ATCC BAA-471 / A3(2) / M145</strain>
    </source>
</reference>
<accession>Q9K3R6</accession>
<protein>
    <recommendedName>
        <fullName evidence="1">4-diphosphocytidyl-2-C-methyl-D-erythritol kinase</fullName>
        <shortName evidence="1">CMK</shortName>
        <ecNumber evidence="1">2.7.1.148</ecNumber>
    </recommendedName>
    <alternativeName>
        <fullName evidence="1">4-(cytidine-5'-diphospho)-2-C-methyl-D-erythritol kinase</fullName>
    </alternativeName>
</protein>